<comment type="cofactor">
    <cofactor evidence="1">
        <name>heme</name>
        <dbReference type="ChEBI" id="CHEBI:30413"/>
    </cofactor>
</comment>
<comment type="similarity">
    <text evidence="2">Belongs to the cytochrome P450 family.</text>
</comment>
<proteinExistence type="evidence at transcript level"/>
<evidence type="ECO:0000250" key="1"/>
<evidence type="ECO:0000305" key="2"/>
<gene>
    <name type="primary">CYP76A2</name>
    <name type="synonym">CYPEG7</name>
</gene>
<name>C76A2_SOLME</name>
<dbReference type="EC" id="1.14.-.-"/>
<dbReference type="EMBL" id="X71657">
    <property type="protein sequence ID" value="CAA50648.1"/>
    <property type="molecule type" value="mRNA"/>
</dbReference>
<dbReference type="PIR" id="S38534">
    <property type="entry name" value="S38534"/>
</dbReference>
<dbReference type="SMR" id="P37122"/>
<dbReference type="KEGG" id="ag:CAA50648"/>
<dbReference type="GO" id="GO:0020037">
    <property type="term" value="F:heme binding"/>
    <property type="evidence" value="ECO:0007669"/>
    <property type="project" value="InterPro"/>
</dbReference>
<dbReference type="GO" id="GO:0005506">
    <property type="term" value="F:iron ion binding"/>
    <property type="evidence" value="ECO:0007669"/>
    <property type="project" value="InterPro"/>
</dbReference>
<dbReference type="GO" id="GO:0004497">
    <property type="term" value="F:monooxygenase activity"/>
    <property type="evidence" value="ECO:0007669"/>
    <property type="project" value="UniProtKB-KW"/>
</dbReference>
<dbReference type="GO" id="GO:0016705">
    <property type="term" value="F:oxidoreductase activity, acting on paired donors, with incorporation or reduction of molecular oxygen"/>
    <property type="evidence" value="ECO:0007669"/>
    <property type="project" value="InterPro"/>
</dbReference>
<dbReference type="CDD" id="cd11073">
    <property type="entry name" value="CYP76-like"/>
    <property type="match status" value="1"/>
</dbReference>
<dbReference type="FunFam" id="1.10.630.10:FF:000007">
    <property type="entry name" value="Cytochrome P450 76C4"/>
    <property type="match status" value="1"/>
</dbReference>
<dbReference type="Gene3D" id="1.10.630.10">
    <property type="entry name" value="Cytochrome P450"/>
    <property type="match status" value="1"/>
</dbReference>
<dbReference type="InterPro" id="IPR001128">
    <property type="entry name" value="Cyt_P450"/>
</dbReference>
<dbReference type="InterPro" id="IPR017972">
    <property type="entry name" value="Cyt_P450_CS"/>
</dbReference>
<dbReference type="InterPro" id="IPR002401">
    <property type="entry name" value="Cyt_P450_E_grp-I"/>
</dbReference>
<dbReference type="InterPro" id="IPR036396">
    <property type="entry name" value="Cyt_P450_sf"/>
</dbReference>
<dbReference type="PANTHER" id="PTHR47950:SF36">
    <property type="entry name" value="CYTOCHROME P450 76A2-LIKE"/>
    <property type="match status" value="1"/>
</dbReference>
<dbReference type="PANTHER" id="PTHR47950">
    <property type="entry name" value="CYTOCHROME P450, FAMILY 76, SUBFAMILY C, POLYPEPTIDE 5-RELATED"/>
    <property type="match status" value="1"/>
</dbReference>
<dbReference type="Pfam" id="PF00067">
    <property type="entry name" value="p450"/>
    <property type="match status" value="1"/>
</dbReference>
<dbReference type="PRINTS" id="PR00463">
    <property type="entry name" value="EP450I"/>
</dbReference>
<dbReference type="PRINTS" id="PR00385">
    <property type="entry name" value="P450"/>
</dbReference>
<dbReference type="SUPFAM" id="SSF48264">
    <property type="entry name" value="Cytochrome P450"/>
    <property type="match status" value="1"/>
</dbReference>
<dbReference type="PROSITE" id="PS00086">
    <property type="entry name" value="CYTOCHROME_P450"/>
    <property type="match status" value="1"/>
</dbReference>
<feature type="chain" id="PRO_0000052139" description="Cytochrome P450 76A2">
    <location>
        <begin position="1"/>
        <end position="505"/>
    </location>
</feature>
<feature type="binding site" description="axial binding residue" evidence="1">
    <location>
        <position position="448"/>
    </location>
    <ligand>
        <name>heme</name>
        <dbReference type="ChEBI" id="CHEBI:30413"/>
    </ligand>
    <ligandPart>
        <name>Fe</name>
        <dbReference type="ChEBI" id="CHEBI:18248"/>
    </ligandPart>
</feature>
<accession>P37122</accession>
<reference key="1">
    <citation type="journal article" date="1993" name="Biochim. Biophys. Acta">
        <title>The cloning of eggplant seedling cDNAs encoding proteins from a novel cytochrome P-450 family (CYP76).</title>
        <authorList>
            <person name="Toguri T."/>
            <person name="Kobayashi O."/>
            <person name="Umemoto N."/>
        </authorList>
    </citation>
    <scope>NUCLEOTIDE SEQUENCE [MRNA]</scope>
    <source>
        <strain>cv. Sinsadoharanasu</strain>
        <tissue>Hypocotyl</tissue>
    </source>
</reference>
<organism>
    <name type="scientific">Solanum melongena</name>
    <name type="common">Eggplant</name>
    <name type="synonym">Aubergine</name>
    <dbReference type="NCBI Taxonomy" id="223891"/>
    <lineage>
        <taxon>Eukaryota</taxon>
        <taxon>Viridiplantae</taxon>
        <taxon>Streptophyta</taxon>
        <taxon>Embryophyta</taxon>
        <taxon>Tracheophyta</taxon>
        <taxon>Spermatophyta</taxon>
        <taxon>Magnoliopsida</taxon>
        <taxon>eudicotyledons</taxon>
        <taxon>Gunneridae</taxon>
        <taxon>Pentapetalae</taxon>
        <taxon>asterids</taxon>
        <taxon>lamiids</taxon>
        <taxon>Solanales</taxon>
        <taxon>Solanaceae</taxon>
        <taxon>Solanoideae</taxon>
        <taxon>Solaneae</taxon>
        <taxon>Solanum</taxon>
    </lineage>
</organism>
<sequence length="505" mass="57807">MEWEWSYVFFSAIIILPAFILFFSQKNTTKSSYKFPPGPPGLPIFGNMFELGTEPYKKMAVLRQKYGPVLWLKLGSTYTMVVQTAQASEELFKNHDISFANRVIPDVNQAHSYYQGSLAIAPYGPFWRFQRRICTIEMFVHKKISETEPVRRKCVDNMLKWIEKEANSAEKGSGIEVTRFVFLASFNMLGNLILSKDLADLESEEASEFFIAMKRINEWSGIANVSDIFPFLKKFDLQSLRKKMARDMGKAVEIMSMFLKEREEERKKGTEKGKDFLDVLLEFQGTGKDEPAKLSEHEIKIFVLEMFLAGTETTSSSVEWALTELLRHPEAMAKVKTEISQAIEPNRKFEDSDIENLPYMQAVLKESLRLHPPLPFLIPRETIQDTKFMGYDVPKDTQVLVNAWAIGRDPECWDDPMSFKPERFLGSKIDVKGQHYGLIPFGAGRRMCVGLPLGHRMMHFALGSLLREFEWELPDGVSPKSINMDGSMGVTARKRDSLKVIPKKA</sequence>
<keyword id="KW-0349">Heme</keyword>
<keyword id="KW-0408">Iron</keyword>
<keyword id="KW-0479">Metal-binding</keyword>
<keyword id="KW-0503">Monooxygenase</keyword>
<keyword id="KW-0560">Oxidoreductase</keyword>
<protein>
    <recommendedName>
        <fullName>Cytochrome P450 76A2</fullName>
        <ecNumber>1.14.-.-</ecNumber>
    </recommendedName>
    <alternativeName>
        <fullName>CYPLXXVIA2</fullName>
    </alternativeName>
    <alternativeName>
        <fullName>Cytochrome P-450EG7</fullName>
    </alternativeName>
</protein>